<accession>Q0D1P2</accession>
<dbReference type="EC" id="1.-.-.-" evidence="20"/>
<dbReference type="EMBL" id="CH476594">
    <property type="protein sequence ID" value="EAU38788.1"/>
    <property type="molecule type" value="Genomic_DNA"/>
</dbReference>
<dbReference type="RefSeq" id="XP_001210228.1">
    <property type="nucleotide sequence ID" value="XM_001210228.1"/>
</dbReference>
<dbReference type="SMR" id="Q0D1P2"/>
<dbReference type="STRING" id="341663.Q0D1P2"/>
<dbReference type="GlyCosmos" id="Q0D1P2">
    <property type="glycosylation" value="3 sites, No reported glycans"/>
</dbReference>
<dbReference type="EnsemblFungi" id="EAU38788">
    <property type="protein sequence ID" value="EAU38788"/>
    <property type="gene ID" value="ATEG_00142"/>
</dbReference>
<dbReference type="GeneID" id="4354899"/>
<dbReference type="VEuPathDB" id="FungiDB:ATEG_00142"/>
<dbReference type="eggNOG" id="KOG3855">
    <property type="taxonomic scope" value="Eukaryota"/>
</dbReference>
<dbReference type="HOGENOM" id="CLU_009665_9_2_1"/>
<dbReference type="OMA" id="EAYHNIE"/>
<dbReference type="OrthoDB" id="1716816at2759"/>
<dbReference type="Proteomes" id="UP000007963">
    <property type="component" value="Unassembled WGS sequence"/>
</dbReference>
<dbReference type="GO" id="GO:0071949">
    <property type="term" value="F:FAD binding"/>
    <property type="evidence" value="ECO:0007669"/>
    <property type="project" value="InterPro"/>
</dbReference>
<dbReference type="GO" id="GO:0016709">
    <property type="term" value="F:oxidoreductase activity, acting on paired donors, with incorporation or reduction of molecular oxygen, NAD(P)H as one donor, and incorporation of one atom of oxygen"/>
    <property type="evidence" value="ECO:0007669"/>
    <property type="project" value="UniProtKB-ARBA"/>
</dbReference>
<dbReference type="CDD" id="cd02979">
    <property type="entry name" value="PHOX_C"/>
    <property type="match status" value="1"/>
</dbReference>
<dbReference type="Gene3D" id="3.40.30.20">
    <property type="match status" value="1"/>
</dbReference>
<dbReference type="Gene3D" id="3.30.9.10">
    <property type="entry name" value="D-Amino Acid Oxidase, subunit A, domain 2"/>
    <property type="match status" value="1"/>
</dbReference>
<dbReference type="Gene3D" id="3.50.50.60">
    <property type="entry name" value="FAD/NAD(P)-binding domain"/>
    <property type="match status" value="1"/>
</dbReference>
<dbReference type="InterPro" id="IPR002938">
    <property type="entry name" value="FAD-bd"/>
</dbReference>
<dbReference type="InterPro" id="IPR036188">
    <property type="entry name" value="FAD/NAD-bd_sf"/>
</dbReference>
<dbReference type="InterPro" id="IPR012941">
    <property type="entry name" value="Phe_hydrox_C_dim_dom"/>
</dbReference>
<dbReference type="InterPro" id="IPR038220">
    <property type="entry name" value="PHOX_C_sf"/>
</dbReference>
<dbReference type="InterPro" id="IPR050641">
    <property type="entry name" value="RIFMO-like"/>
</dbReference>
<dbReference type="InterPro" id="IPR036249">
    <property type="entry name" value="Thioredoxin-like_sf"/>
</dbReference>
<dbReference type="NCBIfam" id="NF006144">
    <property type="entry name" value="PRK08294.1"/>
    <property type="match status" value="1"/>
</dbReference>
<dbReference type="PANTHER" id="PTHR43004:SF10">
    <property type="entry name" value="2-MONOOXYGENASE, PUTATIVE (AFU_ORTHOLOGUE AFUA_6G11480)-RELATED"/>
    <property type="match status" value="1"/>
</dbReference>
<dbReference type="PANTHER" id="PTHR43004">
    <property type="entry name" value="TRK SYSTEM POTASSIUM UPTAKE PROTEIN"/>
    <property type="match status" value="1"/>
</dbReference>
<dbReference type="Pfam" id="PF01494">
    <property type="entry name" value="FAD_binding_3"/>
    <property type="match status" value="1"/>
</dbReference>
<dbReference type="Pfam" id="PF07976">
    <property type="entry name" value="Phe_hydrox_dim"/>
    <property type="match status" value="1"/>
</dbReference>
<dbReference type="PRINTS" id="PR00420">
    <property type="entry name" value="RNGMNOXGNASE"/>
</dbReference>
<dbReference type="SUPFAM" id="SSF54373">
    <property type="entry name" value="FAD-linked reductases, C-terminal domain"/>
    <property type="match status" value="1"/>
</dbReference>
<dbReference type="SUPFAM" id="SSF51905">
    <property type="entry name" value="FAD/NAD(P)-binding domain"/>
    <property type="match status" value="1"/>
</dbReference>
<dbReference type="SUPFAM" id="SSF52833">
    <property type="entry name" value="Thioredoxin-like"/>
    <property type="match status" value="1"/>
</dbReference>
<name>TERD_ASPTN</name>
<feature type="signal peptide" evidence="3">
    <location>
        <begin position="1"/>
        <end position="23"/>
    </location>
</feature>
<feature type="chain" id="PRO_0000437616" description="FAD-dependent monooxygenase terD" evidence="3">
    <location>
        <begin position="24"/>
        <end position="614"/>
    </location>
</feature>
<feature type="binding site" evidence="2">
    <location>
        <begin position="6"/>
        <end position="35"/>
    </location>
    <ligand>
        <name>FAD</name>
        <dbReference type="ChEBI" id="CHEBI:57692"/>
    </ligand>
</feature>
<feature type="binding site" evidence="2">
    <location>
        <position position="44"/>
    </location>
    <ligand>
        <name>FAD</name>
        <dbReference type="ChEBI" id="CHEBI:57692"/>
    </ligand>
</feature>
<feature type="binding site" evidence="2">
    <location>
        <position position="137"/>
    </location>
    <ligand>
        <name>FAD</name>
        <dbReference type="ChEBI" id="CHEBI:57692"/>
    </ligand>
</feature>
<feature type="binding site" evidence="2">
    <location>
        <begin position="239"/>
        <end position="241"/>
    </location>
    <ligand>
        <name>FAD</name>
        <dbReference type="ChEBI" id="CHEBI:57692"/>
    </ligand>
</feature>
<feature type="binding site" evidence="2">
    <location>
        <position position="282"/>
    </location>
    <ligand>
        <name>FAD</name>
        <dbReference type="ChEBI" id="CHEBI:57692"/>
    </ligand>
</feature>
<feature type="binding site" evidence="2">
    <location>
        <position position="303"/>
    </location>
    <ligand>
        <name>FAD</name>
        <dbReference type="ChEBI" id="CHEBI:57692"/>
    </ligand>
</feature>
<feature type="binding site" evidence="2">
    <location>
        <position position="319"/>
    </location>
    <ligand>
        <name>FAD</name>
        <dbReference type="ChEBI" id="CHEBI:57692"/>
    </ligand>
</feature>
<feature type="glycosylation site" description="N-linked (GlcNAc...) asparagine" evidence="4">
    <location>
        <position position="260"/>
    </location>
</feature>
<feature type="glycosylation site" description="N-linked (GlcNAc...) asparagine" evidence="4">
    <location>
        <position position="317"/>
    </location>
</feature>
<feature type="glycosylation site" description="N-linked (GlcNAc...) asparagine" evidence="4">
    <location>
        <position position="602"/>
    </location>
</feature>
<gene>
    <name evidence="18" type="primary">terD</name>
    <name type="ORF">ATEG_00142</name>
</gene>
<comment type="function">
    <text evidence="12">FAD-dependent monooxygenase; part of the gene cluster that mediates the biosynthesis of terrein, a fungal metabolite with ecological, antimicrobial, antiproliferative, and antioxidative activities (PubMed:24816227). The first step in the pathway is performed by the polyketide synthase terA that produces 4-hydroxy-6-methylpyranon (4-HMP), orsellinic acid (OA), and 2,3-dehydro-6-hydroxymellein (2,3-dehydro-6-HM) by condensing acetyl-CoA with two, three, or four malonyl-CoA units, respectively (PubMed:24816227). 4-HMP and OA are not pathway intermediates, but are rather shunt or side products (PubMed:24816227). 2,3-dehydro-6-HM is further converted to 6-hydroxymellein (6-HM) by the 6-hydroxymellein synthase terB (PubMed:24816227). The monooxygenases terC and terD, the multicopper oxidase terE and the Kelch-like protein terF are then involved in the transformation of 6-HM to terrein (PubMed:24816227). Even if they are co-regulated with the other terrein cluster genes, terH and terI seem to be dispensable for terrein production; whereas one or both of the 2 transporters terG and terJ are probably required for efficient secretion of metabolites (PubMed:24816227).</text>
</comment>
<comment type="cofactor">
    <cofactor evidence="1">
        <name>FAD</name>
        <dbReference type="ChEBI" id="CHEBI:57692"/>
    </cofactor>
</comment>
<comment type="pathway">
    <text evidence="12">Secondary metabolite biosynthesis.</text>
</comment>
<comment type="induction">
    <text evidence="15">Expression is under the control of the terrein cluster-specific transcription factor terR (PubMed:25852654).</text>
</comment>
<comment type="disruption phenotype">
    <text evidence="12">Impairs the production of terrein (PubMed:24816227).</text>
</comment>
<comment type="biotechnology">
    <text evidence="5 6 7 8 9 10 11 13 14 16 17">Terrein shows anticancer activity on various tumors including cervical carcinoma, ovarian cancer, and head and neck cancer (PubMed:23417151, PubMed:25318762, PubMed:25592371, PubMed:27127118). The secondary metabolite acts as angiogenesis inhibitors through the inhibition of angiogenin secretion (PubMed:18776656, PubMed:27127118). Terrein also has anti-inflammatory activity (PubMed:18358890). It shows an alleviative function of age-related inflammation characterized as an anti-oxidant and might therefore be a useful nutraceutical compound for anti-aging (PubMed:26416516). Terrein may enhance osseointegration by decreasing the level of ROS and has a potentially synergistic effect on osteoblast differentiation (PubMed:21104936). Terrein has also been shown to act as a melanogenesis inhibitor (PubMed:15558216, PubMed:15603975, PubMed:19493001).</text>
</comment>
<comment type="similarity">
    <text evidence="19">Belongs to the PheA/TfdB FAD monooxygenase family.</text>
</comment>
<organism>
    <name type="scientific">Aspergillus terreus (strain NIH 2624 / FGSC A1156)</name>
    <dbReference type="NCBI Taxonomy" id="341663"/>
    <lineage>
        <taxon>Eukaryota</taxon>
        <taxon>Fungi</taxon>
        <taxon>Dikarya</taxon>
        <taxon>Ascomycota</taxon>
        <taxon>Pezizomycotina</taxon>
        <taxon>Eurotiomycetes</taxon>
        <taxon>Eurotiomycetidae</taxon>
        <taxon>Eurotiales</taxon>
        <taxon>Aspergillaceae</taxon>
        <taxon>Aspergillus</taxon>
        <taxon>Aspergillus subgen. Circumdati</taxon>
    </lineage>
</organism>
<sequence>MSSKFDVVICGSGTAGLAAATWLAQYGVDCKILESRSGPLDVGQADGIQVRSVEIFESFGMAEELLREAYHNIEVAFWGSNPTSSGMGIVRKRSAHATTPGLSHMPRVILNQARFNEMWLEAMRRRNGQEVDYGHKVTKVTVDEEKATDPDAYPVTIVAQKDGQEQVFEAKYCLASDGAHSAVRKSLGFNMVGETSDSVWGVMDVFPRTNFPDIRKQCIIQSDAGSIITIPREGGSMVRVYVELAAGTNAKEVTLEQIQNASRQVFHPYALDVADVWWWSAYPIGQRIADHFSKANRVFLTGDACHTHSPKAGQGMNVSLQDGYNIGWKLASVLKGHAGPELLETYVLERQKVADVLINWDKVWAKQMCSIAKEDGGVVDANGKIDFSEVFVKAEAFTAGLTVTYGDSIITQAGDSNQQAATNLKVGMRLPAAQVVRFCDAKVMKTVNALPSDGRWRIMIFPGDIRQPSASTRLAQLGTYLFSNHGPIRKYLPPGADIDSLIEVIVILSGERLEIQQDQIPDAFWPTTGKYRMRDLHKIYIDDETYHNGHGHAYDFYGIDPERGAVAIVRPDQYISKVLDMKNHEGISAFFEKFLQKKGQANGSLNSHDEWTLA</sequence>
<proteinExistence type="evidence at protein level"/>
<protein>
    <recommendedName>
        <fullName evidence="20">FAD-dependent monooxygenase terD</fullName>
        <ecNumber evidence="20">1.-.-.-</ecNumber>
    </recommendedName>
    <alternativeName>
        <fullName evidence="18">Terrein biosynthesis cluster protein terD</fullName>
    </alternativeName>
</protein>
<keyword id="KW-0274">FAD</keyword>
<keyword id="KW-0285">Flavoprotein</keyword>
<keyword id="KW-0325">Glycoprotein</keyword>
<keyword id="KW-0503">Monooxygenase</keyword>
<keyword id="KW-0560">Oxidoreductase</keyword>
<keyword id="KW-1185">Reference proteome</keyword>
<keyword id="KW-0732">Signal</keyword>
<evidence type="ECO:0000250" key="1"/>
<evidence type="ECO:0000250" key="2">
    <source>
        <dbReference type="UniProtKB" id="Q6SSJ6"/>
    </source>
</evidence>
<evidence type="ECO:0000255" key="3"/>
<evidence type="ECO:0000255" key="4">
    <source>
        <dbReference type="PROSITE-ProRule" id="PRU00498"/>
    </source>
</evidence>
<evidence type="ECO:0000269" key="5">
    <source>
    </source>
</evidence>
<evidence type="ECO:0000269" key="6">
    <source>
    </source>
</evidence>
<evidence type="ECO:0000269" key="7">
    <source>
    </source>
</evidence>
<evidence type="ECO:0000269" key="8">
    <source>
    </source>
</evidence>
<evidence type="ECO:0000269" key="9">
    <source>
    </source>
</evidence>
<evidence type="ECO:0000269" key="10">
    <source>
    </source>
</evidence>
<evidence type="ECO:0000269" key="11">
    <source>
    </source>
</evidence>
<evidence type="ECO:0000269" key="12">
    <source>
    </source>
</evidence>
<evidence type="ECO:0000269" key="13">
    <source>
    </source>
</evidence>
<evidence type="ECO:0000269" key="14">
    <source>
    </source>
</evidence>
<evidence type="ECO:0000269" key="15">
    <source>
    </source>
</evidence>
<evidence type="ECO:0000269" key="16">
    <source>
    </source>
</evidence>
<evidence type="ECO:0000269" key="17">
    <source>
    </source>
</evidence>
<evidence type="ECO:0000303" key="18">
    <source>
    </source>
</evidence>
<evidence type="ECO:0000305" key="19"/>
<evidence type="ECO:0000305" key="20">
    <source>
    </source>
</evidence>
<reference key="1">
    <citation type="submission" date="2005-09" db="EMBL/GenBank/DDBJ databases">
        <title>Annotation of the Aspergillus terreus NIH2624 genome.</title>
        <authorList>
            <person name="Birren B.W."/>
            <person name="Lander E.S."/>
            <person name="Galagan J.E."/>
            <person name="Nusbaum C."/>
            <person name="Devon K."/>
            <person name="Henn M."/>
            <person name="Ma L.-J."/>
            <person name="Jaffe D.B."/>
            <person name="Butler J."/>
            <person name="Alvarez P."/>
            <person name="Gnerre S."/>
            <person name="Grabherr M."/>
            <person name="Kleber M."/>
            <person name="Mauceli E.W."/>
            <person name="Brockman W."/>
            <person name="Rounsley S."/>
            <person name="Young S.K."/>
            <person name="LaButti K."/>
            <person name="Pushparaj V."/>
            <person name="DeCaprio D."/>
            <person name="Crawford M."/>
            <person name="Koehrsen M."/>
            <person name="Engels R."/>
            <person name="Montgomery P."/>
            <person name="Pearson M."/>
            <person name="Howarth C."/>
            <person name="Larson L."/>
            <person name="Luoma S."/>
            <person name="White J."/>
            <person name="Alvarado L."/>
            <person name="Kodira C.D."/>
            <person name="Zeng Q."/>
            <person name="Oleary S."/>
            <person name="Yandava C."/>
            <person name="Denning D.W."/>
            <person name="Nierman W.C."/>
            <person name="Milne T."/>
            <person name="Madden K."/>
        </authorList>
    </citation>
    <scope>NUCLEOTIDE SEQUENCE [LARGE SCALE GENOMIC DNA]</scope>
    <source>
        <strain>NIH 2624 / FGSC A1156</strain>
    </source>
</reference>
<reference key="2">
    <citation type="journal article" date="2004" name="Cell. Mol. Life Sci.">
        <title>Terrein: a new melanogenesis inhibitor and its mechanism.</title>
        <authorList>
            <person name="Park S.H."/>
            <person name="Kim D.S."/>
            <person name="Kim W.G."/>
            <person name="Ryoo I.J."/>
            <person name="Lee D.H."/>
            <person name="Huh C.H."/>
            <person name="Youn S.W."/>
            <person name="Yoo I.D."/>
            <person name="Park K.C."/>
        </authorList>
    </citation>
    <scope>BIOTECHNOLOGY</scope>
</reference>
<reference key="3">
    <citation type="journal article" date="2005" name="Bioorg. Med. Chem. Lett.">
        <title>Synthesis and melanin biosynthesis inhibitory activity of (+/-)-terrein produced by Penicillium sp. 20135.</title>
        <authorList>
            <person name="Lee S."/>
            <person name="Kim W.G."/>
            <person name="Kim E."/>
            <person name="Ryoo I.J."/>
            <person name="Lee H.K."/>
            <person name="Kim J.N."/>
            <person name="Jung S.H."/>
            <person name="Yoo I.D."/>
        </authorList>
    </citation>
    <scope>BIOTECHNOLOGY</scope>
</reference>
<reference key="4">
    <citation type="journal article" date="2008" name="J. Antibiot.">
        <title>A new terrein glucoside, a novel inhibitor of angiogenin secretion in tumor angiogenesis.</title>
        <authorList>
            <person name="Arakawa M."/>
            <person name="Someno T."/>
            <person name="Kawada M."/>
            <person name="Ikeda D."/>
        </authorList>
    </citation>
    <scope>BIOTECHNOLOGY</scope>
</reference>
<reference key="5">
    <citation type="journal article" date="2008" name="J. Endod.">
        <title>Terrein reduces pulpal inflammation in human dental pulp cells.</title>
        <authorList>
            <person name="Lee J.C."/>
            <person name="Yu M.K."/>
            <person name="Lee R."/>
            <person name="Lee Y.H."/>
            <person name="Jeon J.G."/>
            <person name="Lee M.H."/>
            <person name="Jhee E.C."/>
            <person name="Yoo I.D."/>
            <person name="Yi H.K."/>
        </authorList>
    </citation>
    <scope>BIOTECHNOLOGY</scope>
</reference>
<reference key="6">
    <citation type="journal article" date="2009" name="Exp. Dermatol.">
        <title>Long-term suppression of tyrosinase by terrein via tyrosinase degradation and its decreased expression.</title>
        <authorList>
            <person name="Park S.H."/>
            <person name="Kim D.S."/>
            <person name="Lee H.K."/>
            <person name="Kwon S.B."/>
            <person name="Lee S."/>
            <person name="Ryoo I.J."/>
            <person name="Kim W.G."/>
            <person name="Yoo I.D."/>
            <person name="Park K.C."/>
        </authorList>
    </citation>
    <scope>BIOTECHNOLOGY</scope>
</reference>
<reference key="7">
    <citation type="journal article" date="2010" name="Cell Biochem. Funct.">
        <title>Enhancement of osteoblast biocompatibility on titanium surface with Terrein treatment.</title>
        <authorList>
            <person name="Lee Y.H."/>
            <person name="Lee N.H."/>
            <person name="Bhattarai G."/>
            <person name="Oh Y.T."/>
            <person name="Yu M.K."/>
            <person name="Yoo I.D."/>
            <person name="Jhee E.C."/>
            <person name="Yi H.K."/>
        </authorList>
    </citation>
    <scope>BIOTECHNOLOGY</scope>
</reference>
<reference key="8">
    <citation type="journal article" date="2013" name="Oncol. Rep.">
        <title>Terrein induces apoptosis in HeLa human cervical carcinoma cells through p53 and ERK regulation.</title>
        <authorList>
            <person name="Porameesanaporn Y."/>
            <person name="Uthaisang-Tanechpongtamb W."/>
            <person name="Jarintanan F."/>
            <person name="Jongrungruangchok S."/>
            <person name="Thanomsub Wongsatayanon B."/>
        </authorList>
    </citation>
    <scope>BIOTECHNOLOGY</scope>
</reference>
<reference key="9">
    <citation type="journal article" date="2014" name="Chem. Biol.">
        <title>Terrein biosynthesis in Aspergillus terreus and its impact on phytotoxicity.</title>
        <authorList>
            <person name="Zaehle C."/>
            <person name="Gressler M."/>
            <person name="Shelest E."/>
            <person name="Geib E."/>
            <person name="Hertweck C."/>
            <person name="Brock M."/>
        </authorList>
    </citation>
    <scope>FUNCTION</scope>
    <scope>DISRUPTION PHENOTYPE</scope>
</reference>
<reference key="10">
    <citation type="journal article" date="2014" name="Int. J. Mol. Med.">
        <title>The marine-derived fungal metabolite, terrein, inhibits cell proliferation and induces cell cycle arrest in human ovarian cancer cells.</title>
        <authorList>
            <person name="Chen Y.F."/>
            <person name="Wang S.Y."/>
            <person name="Shen H."/>
            <person name="Yao X.F."/>
            <person name="Zhang F.L."/>
            <person name="Lai D."/>
        </authorList>
    </citation>
    <scope>BIOTECHNOLOGY</scope>
</reference>
<reference key="11">
    <citation type="journal article" date="2015" name="Cell Biochem. Funct.">
        <title>Terrein reduces age-related inflammation induced by oxidative stress through Nrf2/ERK1/2/HO-1 signalling in aged HDF cells.</title>
        <authorList>
            <person name="Lee Y.H."/>
            <person name="Lee S.J."/>
            <person name="Jung J.E."/>
            <person name="Kim J.S."/>
            <person name="Lee N.H."/>
            <person name="Yi H.K."/>
        </authorList>
    </citation>
    <scope>BIOTECHNOLOGY</scope>
</reference>
<reference key="12">
    <citation type="journal article" date="2015" name="Front. Microbiol.">
        <title>A new high-performance heterologous fungal expression system based on regulatory elements from the Aspergillus terreus terrein gene cluster.</title>
        <authorList>
            <person name="Gressler M."/>
            <person name="Hortschansky P."/>
            <person name="Geib E."/>
            <person name="Brock M."/>
        </authorList>
    </citation>
    <scope>INDUCTION</scope>
</reference>
<reference key="13">
    <citation type="journal article" date="2015" name="Oncol. Rep.">
        <title>(+)-Terrein inhibits human hepatoma Bel-7402 proliferation through cell cycle arrest.</title>
        <authorList>
            <person name="Zhang F."/>
            <person name="Mijiti M."/>
            <person name="Ding W."/>
            <person name="Song J."/>
            <person name="Yin Y."/>
            <person name="Sun W."/>
            <person name="Li Z."/>
        </authorList>
    </citation>
    <scope>BIOTECHNOLOGY</scope>
</reference>
<reference key="14">
    <citation type="journal article" date="2016" name="Anticancer Res.">
        <title>Synthetic terrein inhibits progression of head and neck cancer by suppressing angiogenin production.</title>
        <authorList>
            <person name="Shibata A."/>
            <person name="Ibaragi S."/>
            <person name="Mandai H."/>
            <person name="Tsumura T."/>
            <person name="Kishimoto K."/>
            <person name="Okui T."/>
            <person name="Hassan N.M."/>
            <person name="Shimo T."/>
            <person name="Omori K."/>
            <person name="Hu G.F."/>
            <person name="Takashiba S."/>
            <person name="Suga S."/>
            <person name="Sasaki A."/>
        </authorList>
    </citation>
    <scope>BIOTECHNOLOGY</scope>
</reference>